<protein>
    <recommendedName>
        <fullName>Telomere-binding protein subunit alpha</fullName>
    </recommendedName>
    <alternativeName>
        <fullName>TEBP alpha</fullName>
    </alternativeName>
    <alternativeName>
        <fullName>Telomere-binding protein 56 kDa subunit</fullName>
    </alternativeName>
</protein>
<reference key="1">
    <citation type="journal article" date="1991" name="Cell">
        <title>Cloning and expression of genes for the Oxytricha telomere-binding protein: specific subunit interactions in the telomeric complex.</title>
        <authorList>
            <person name="Gray J.T."/>
            <person name="Celander D.W."/>
            <person name="Price C.M."/>
            <person name="Cech T.R."/>
        </authorList>
    </citation>
    <scope>NUCLEOTIDE SEQUENCE [GENOMIC DNA]</scope>
    <scope>PARTIAL PROTEIN SEQUENCE</scope>
</reference>
<reference key="2">
    <citation type="journal article" date="1992" name="Genes Dev.">
        <title>Analysis of a scrambled gene: the gene encoding alpha-telomere-binding protein in Oxytricha nova.</title>
        <authorList>
            <person name="Mitcham J.L."/>
            <person name="Lynn A.J."/>
            <person name="Prescott D.M."/>
        </authorList>
    </citation>
    <scope>NUCLEOTIDE SEQUENCE [GENOMIC DNA]</scope>
</reference>
<reference key="3">
    <citation type="journal article" date="1998" name="Cell">
        <title>Crystal structure of the Oxytricha nova telomere end binding protein complexed with single strand DNA.</title>
        <authorList>
            <person name="Horvath M.P."/>
            <person name="Schweiker V.L."/>
            <person name="Bevilacqua J.M."/>
            <person name="Ruggles J.A."/>
            <person name="Schultz S.C."/>
        </authorList>
    </citation>
    <scope>X-RAY CRYSTALLOGRAPHY (2.8 ANGSTROMS)</scope>
</reference>
<comment type="function">
    <text>May function as protective capping of the single-stranded telomeric overhang. May also participate in telomere length regulation during DNA replication. Binds specifically to the T4G4-containing extension on the 3'strand and protects this region of the telomere from nuclease digestion and chemical modification.</text>
</comment>
<comment type="subunit">
    <text>Heterodimer of an alpha and a beta subunit.</text>
</comment>
<comment type="subcellular location">
    <subcellularLocation>
        <location>Nucleus</location>
    </subcellularLocation>
    <subcellularLocation>
        <location>Chromosome</location>
        <location>Telomere</location>
    </subcellularLocation>
</comment>
<comment type="miscellaneous">
    <text>The sequence of the A (or alanine) version is shown. The S (or serine) version differs in only two positions, and the K version in only one. There may be other versions in addition to the S, A, and K versions.</text>
</comment>
<comment type="similarity">
    <text evidence="2">Belongs to the telombin family.</text>
</comment>
<gene>
    <name type="primary">MAC-56A</name>
</gene>
<gene>
    <name type="primary">MAC-56K</name>
</gene>
<gene>
    <name type="primary">MAC-56S</name>
</gene>
<accession>P29549</accession>
<organism>
    <name type="scientific">Sterkiella nova</name>
    <name type="common">Ciliate</name>
    <name type="synonym">Oxytricha nova</name>
    <dbReference type="NCBI Taxonomy" id="200597"/>
    <lineage>
        <taxon>Eukaryota</taxon>
        <taxon>Sar</taxon>
        <taxon>Alveolata</taxon>
        <taxon>Ciliophora</taxon>
        <taxon>Intramacronucleata</taxon>
        <taxon>Spirotrichea</taxon>
        <taxon>Stichotrichia</taxon>
        <taxon>Sporadotrichida</taxon>
        <taxon>Oxytrichidae</taxon>
        <taxon>Stylonychinae</taxon>
        <taxon>Sterkiella</taxon>
    </lineage>
</organism>
<dbReference type="EMBL" id="M68931">
    <property type="protein sequence ID" value="AAA29398.1"/>
    <property type="molecule type" value="Genomic_DNA"/>
</dbReference>
<dbReference type="EMBL" id="M68930">
    <property type="protein sequence ID" value="AAA29399.1"/>
    <property type="molecule type" value="Genomic_DNA"/>
</dbReference>
<dbReference type="EMBL" id="X59724">
    <property type="protein sequence ID" value="CAA42409.1"/>
    <property type="molecule type" value="Genomic_DNA"/>
</dbReference>
<dbReference type="PIR" id="A41221">
    <property type="entry name" value="A41221"/>
</dbReference>
<dbReference type="PDB" id="1JB7">
    <property type="method" value="X-ray"/>
    <property type="resolution" value="1.86 A"/>
    <property type="chains" value="A=1-495"/>
</dbReference>
<dbReference type="PDB" id="1K8G">
    <property type="method" value="X-ray"/>
    <property type="resolution" value="2.60 A"/>
    <property type="chains" value="A/B/C=1-320"/>
</dbReference>
<dbReference type="PDB" id="1KIX">
    <property type="method" value="X-ray"/>
    <property type="resolution" value="2.70 A"/>
    <property type="chains" value="A=1-495"/>
</dbReference>
<dbReference type="PDB" id="1OTC">
    <property type="method" value="X-ray"/>
    <property type="resolution" value="2.80 A"/>
    <property type="chains" value="A=1-495"/>
</dbReference>
<dbReference type="PDB" id="1PA6">
    <property type="method" value="X-ray"/>
    <property type="resolution" value="2.45 A"/>
    <property type="chains" value="A=36-495"/>
</dbReference>
<dbReference type="PDB" id="1PH1">
    <property type="method" value="X-ray"/>
    <property type="resolution" value="2.51 A"/>
    <property type="chains" value="A=35-495"/>
</dbReference>
<dbReference type="PDB" id="1PH2">
    <property type="method" value="X-ray"/>
    <property type="resolution" value="3.10 A"/>
    <property type="chains" value="A=36-494"/>
</dbReference>
<dbReference type="PDB" id="1PH3">
    <property type="method" value="X-ray"/>
    <property type="resolution" value="2.30 A"/>
    <property type="chains" value="A=36-495"/>
</dbReference>
<dbReference type="PDB" id="1PH4">
    <property type="method" value="X-ray"/>
    <property type="resolution" value="2.30 A"/>
    <property type="chains" value="A=36-495"/>
</dbReference>
<dbReference type="PDB" id="1PH5">
    <property type="method" value="X-ray"/>
    <property type="resolution" value="2.30 A"/>
    <property type="chains" value="A=36-494"/>
</dbReference>
<dbReference type="PDB" id="1PH6">
    <property type="method" value="X-ray"/>
    <property type="resolution" value="2.10 A"/>
    <property type="chains" value="A=35-495"/>
</dbReference>
<dbReference type="PDB" id="1PH7">
    <property type="method" value="X-ray"/>
    <property type="resolution" value="2.90 A"/>
    <property type="chains" value="A=36-495"/>
</dbReference>
<dbReference type="PDB" id="1PH8">
    <property type="method" value="X-ray"/>
    <property type="resolution" value="2.36 A"/>
    <property type="chains" value="A=36-495"/>
</dbReference>
<dbReference type="PDB" id="1PH9">
    <property type="method" value="X-ray"/>
    <property type="resolution" value="2.50 A"/>
    <property type="chains" value="A=36-495"/>
</dbReference>
<dbReference type="PDB" id="1PHJ">
    <property type="method" value="X-ray"/>
    <property type="resolution" value="2.50 A"/>
    <property type="chains" value="A=35-495"/>
</dbReference>
<dbReference type="PDB" id="2I0Q">
    <property type="method" value="X-ray"/>
    <property type="resolution" value="1.91 A"/>
    <property type="chains" value="A=1-495"/>
</dbReference>
<dbReference type="PDBsum" id="1JB7"/>
<dbReference type="PDBsum" id="1K8G"/>
<dbReference type="PDBsum" id="1KIX"/>
<dbReference type="PDBsum" id="1OTC"/>
<dbReference type="PDBsum" id="1PA6"/>
<dbReference type="PDBsum" id="1PH1"/>
<dbReference type="PDBsum" id="1PH2"/>
<dbReference type="PDBsum" id="1PH3"/>
<dbReference type="PDBsum" id="1PH4"/>
<dbReference type="PDBsum" id="1PH5"/>
<dbReference type="PDBsum" id="1PH6"/>
<dbReference type="PDBsum" id="1PH7"/>
<dbReference type="PDBsum" id="1PH8"/>
<dbReference type="PDBsum" id="1PH9"/>
<dbReference type="PDBsum" id="1PHJ"/>
<dbReference type="PDBsum" id="2I0Q"/>
<dbReference type="SMR" id="P29549"/>
<dbReference type="DIP" id="DIP-6194N"/>
<dbReference type="MINT" id="P29549"/>
<dbReference type="EvolutionaryTrace" id="P29549"/>
<dbReference type="GO" id="GO:0000783">
    <property type="term" value="C:nuclear telomere cap complex"/>
    <property type="evidence" value="ECO:0007669"/>
    <property type="project" value="TreeGrafter"/>
</dbReference>
<dbReference type="GO" id="GO:0032991">
    <property type="term" value="C:protein-containing complex"/>
    <property type="evidence" value="ECO:0000314"/>
    <property type="project" value="CAFA"/>
</dbReference>
<dbReference type="GO" id="GO:0000782">
    <property type="term" value="C:telomere cap complex"/>
    <property type="evidence" value="ECO:0000315"/>
    <property type="project" value="CAFA"/>
</dbReference>
<dbReference type="GO" id="GO:0098505">
    <property type="term" value="F:G-rich strand telomeric DNA binding"/>
    <property type="evidence" value="ECO:0007669"/>
    <property type="project" value="TreeGrafter"/>
</dbReference>
<dbReference type="GO" id="GO:0043047">
    <property type="term" value="F:single-stranded telomeric DNA binding"/>
    <property type="evidence" value="ECO:0000315"/>
    <property type="project" value="CAFA"/>
</dbReference>
<dbReference type="GO" id="GO:0010521">
    <property type="term" value="F:telomerase inhibitor activity"/>
    <property type="evidence" value="ECO:0007669"/>
    <property type="project" value="TreeGrafter"/>
</dbReference>
<dbReference type="GO" id="GO:0032210">
    <property type="term" value="P:regulation of telomere maintenance via telomerase"/>
    <property type="evidence" value="ECO:0007669"/>
    <property type="project" value="TreeGrafter"/>
</dbReference>
<dbReference type="GO" id="GO:0016233">
    <property type="term" value="P:telomere capping"/>
    <property type="evidence" value="ECO:0000315"/>
    <property type="project" value="CAFA"/>
</dbReference>
<dbReference type="CDD" id="cd04497">
    <property type="entry name" value="hPOT1_OB1_like"/>
    <property type="match status" value="1"/>
</dbReference>
<dbReference type="FunFam" id="2.40.50.140:FF:000541">
    <property type="entry name" value="Telomere-binding protein subunit alpha"/>
    <property type="match status" value="1"/>
</dbReference>
<dbReference type="Gene3D" id="2.40.50.140">
    <property type="entry name" value="Nucleic acid-binding proteins"/>
    <property type="match status" value="3"/>
</dbReference>
<dbReference type="InterPro" id="IPR012340">
    <property type="entry name" value="NA-bd_OB-fold"/>
</dbReference>
<dbReference type="InterPro" id="IPR028389">
    <property type="entry name" value="POT1"/>
</dbReference>
<dbReference type="InterPro" id="IPR053979">
    <property type="entry name" value="TEBP-like_OB2"/>
</dbReference>
<dbReference type="InterPro" id="IPR011564">
    <property type="entry name" value="Telomer_end-bd_POT1/Cdc13"/>
</dbReference>
<dbReference type="InterPro" id="IPR003415">
    <property type="entry name" value="Telomere-bd_alpha"/>
</dbReference>
<dbReference type="PANTHER" id="PTHR14513">
    <property type="entry name" value="PROTECTION OF TELOMERES 1"/>
    <property type="match status" value="1"/>
</dbReference>
<dbReference type="PANTHER" id="PTHR14513:SF0">
    <property type="entry name" value="PROTECTION OF TELOMERES PROTEIN 1"/>
    <property type="match status" value="1"/>
</dbReference>
<dbReference type="Pfam" id="PF02765">
    <property type="entry name" value="POT1"/>
    <property type="match status" value="2"/>
</dbReference>
<dbReference type="Pfam" id="PF22236">
    <property type="entry name" value="TEBP_OB2-like"/>
    <property type="match status" value="1"/>
</dbReference>
<dbReference type="PIRSF" id="PIRSF015848">
    <property type="entry name" value="TEBP_alpha"/>
    <property type="match status" value="1"/>
</dbReference>
<dbReference type="SMART" id="SM00976">
    <property type="entry name" value="Telo_bind"/>
    <property type="match status" value="1"/>
</dbReference>
<dbReference type="SUPFAM" id="SSF50249">
    <property type="entry name" value="Nucleic acid-binding proteins"/>
    <property type="match status" value="3"/>
</dbReference>
<sequence length="495" mass="56082">MSTAAKQNRSTSRVSKKKTAAPKEGAAKKSDKGHKYEYVELAKASLTSAQPQHFYAVVIDATFPYKTNQERYICSLKIVDPTLYLKQQKGAGDASDYATLVLYAKRFEDLPIIHRAGDIIRVHRATLRLYNGQRQFNANVFYSSSWALFSTDKRSVTQEINNQDAVSDTTPFSFSSKHATIEKNEISILQNLRKWANQYFSSYSVISSDMYTALNKAQAQKGDFDVVAKILQVHELDEYTNELKLKDASGQVFYTLSLKLKFPHVRTGEVVRIRSATYDETSTQKKVLILSHYSNIITFIQSSKLAKELRAKIQDDHSVEVASLKKNVSLNAVVLTEVDKKHAALPSTSLQDLFHHADSDKELQAQDTFRTQFYVTKIEPSDVKEWVKGYDRKTKKSSSLKGASGKGDNIFQVQFLVKDASTQLNNNTYRVLLYTQDGLGANFFNVKADNLHKNADARKKLEDSAELLTKFNSYVDAVVERRNGFYLIKDTKLIY</sequence>
<name>TEBA_STENO</name>
<evidence type="ECO:0000256" key="1">
    <source>
        <dbReference type="SAM" id="MobiDB-lite"/>
    </source>
</evidence>
<evidence type="ECO:0000305" key="2"/>
<evidence type="ECO:0007829" key="3">
    <source>
        <dbReference type="PDB" id="1JB7"/>
    </source>
</evidence>
<evidence type="ECO:0007829" key="4">
    <source>
        <dbReference type="PDB" id="1KIX"/>
    </source>
</evidence>
<evidence type="ECO:0007829" key="5">
    <source>
        <dbReference type="PDB" id="1OTC"/>
    </source>
</evidence>
<evidence type="ECO:0007829" key="6">
    <source>
        <dbReference type="PDB" id="1PH2"/>
    </source>
</evidence>
<evidence type="ECO:0007829" key="7">
    <source>
        <dbReference type="PDB" id="1PH3"/>
    </source>
</evidence>
<evidence type="ECO:0007829" key="8">
    <source>
        <dbReference type="PDB" id="1PH6"/>
    </source>
</evidence>
<evidence type="ECO:0007829" key="9">
    <source>
        <dbReference type="PDB" id="1PH8"/>
    </source>
</evidence>
<evidence type="ECO:0007829" key="10">
    <source>
        <dbReference type="PDB" id="2I0Q"/>
    </source>
</evidence>
<keyword id="KW-0002">3D-structure</keyword>
<keyword id="KW-0158">Chromosome</keyword>
<keyword id="KW-0903">Direct protein sequencing</keyword>
<keyword id="KW-0238">DNA-binding</keyword>
<keyword id="KW-0539">Nucleus</keyword>
<keyword id="KW-0779">Telomere</keyword>
<feature type="chain" id="PRO_0000121735" description="Telomere-binding protein subunit alpha">
    <location>
        <begin position="1"/>
        <end position="495"/>
    </location>
</feature>
<feature type="region of interest" description="Disordered" evidence="1">
    <location>
        <begin position="1"/>
        <end position="31"/>
    </location>
</feature>
<feature type="compositionally biased region" description="Polar residues" evidence="1">
    <location>
        <begin position="1"/>
        <end position="13"/>
    </location>
</feature>
<feature type="sequence variant" description="In K version.">
    <original>A</original>
    <variation>S</variation>
    <location>
        <position position="21"/>
    </location>
</feature>
<feature type="sequence variant" description="In S version.">
    <original>A</original>
    <variation>S</variation>
    <location>
        <position position="311"/>
    </location>
</feature>
<feature type="sequence variant" description="In S version.">
    <original>D</original>
    <variation>E</variation>
    <location>
        <position position="456"/>
    </location>
</feature>
<feature type="turn" evidence="3">
    <location>
        <begin position="41"/>
        <end position="43"/>
    </location>
</feature>
<feature type="strand" evidence="9">
    <location>
        <begin position="46"/>
        <end position="48"/>
    </location>
</feature>
<feature type="strand" evidence="3">
    <location>
        <begin position="52"/>
        <end position="61"/>
    </location>
</feature>
<feature type="strand" evidence="3">
    <location>
        <begin position="68"/>
        <end position="70"/>
    </location>
</feature>
<feature type="strand" evidence="3">
    <location>
        <begin position="72"/>
        <end position="80"/>
    </location>
</feature>
<feature type="strand" evidence="3">
    <location>
        <begin position="83"/>
        <end position="85"/>
    </location>
</feature>
<feature type="strand" evidence="10">
    <location>
        <begin position="89"/>
        <end position="92"/>
    </location>
</feature>
<feature type="strand" evidence="8">
    <location>
        <begin position="93"/>
        <end position="95"/>
    </location>
</feature>
<feature type="strand" evidence="3">
    <location>
        <begin position="98"/>
        <end position="106"/>
    </location>
</feature>
<feature type="helix" evidence="3">
    <location>
        <begin position="107"/>
        <end position="109"/>
    </location>
</feature>
<feature type="strand" evidence="5">
    <location>
        <begin position="115"/>
        <end position="117"/>
    </location>
</feature>
<feature type="strand" evidence="3">
    <location>
        <begin position="119"/>
        <end position="130"/>
    </location>
</feature>
<feature type="strand" evidence="3">
    <location>
        <begin position="133"/>
        <end position="139"/>
    </location>
</feature>
<feature type="turn" evidence="3">
    <location>
        <begin position="140"/>
        <end position="143"/>
    </location>
</feature>
<feature type="strand" evidence="3">
    <location>
        <begin position="145"/>
        <end position="149"/>
    </location>
</feature>
<feature type="strand" evidence="3">
    <location>
        <begin position="151"/>
        <end position="154"/>
    </location>
</feature>
<feature type="helix" evidence="3">
    <location>
        <begin position="156"/>
        <end position="161"/>
    </location>
</feature>
<feature type="strand" evidence="3">
    <location>
        <begin position="172"/>
        <end position="177"/>
    </location>
</feature>
<feature type="helix" evidence="3">
    <location>
        <begin position="185"/>
        <end position="202"/>
    </location>
</feature>
<feature type="helix" evidence="3">
    <location>
        <begin position="208"/>
        <end position="210"/>
    </location>
</feature>
<feature type="helix" evidence="3">
    <location>
        <begin position="214"/>
        <end position="219"/>
    </location>
</feature>
<feature type="strand" evidence="5">
    <location>
        <begin position="220"/>
        <end position="222"/>
    </location>
</feature>
<feature type="strand" evidence="3">
    <location>
        <begin position="224"/>
        <end position="235"/>
    </location>
</feature>
<feature type="strand" evidence="3">
    <location>
        <begin position="237"/>
        <end position="246"/>
    </location>
</feature>
<feature type="strand" evidence="3">
    <location>
        <begin position="252"/>
        <end position="258"/>
    </location>
</feature>
<feature type="turn" evidence="3">
    <location>
        <begin position="259"/>
        <end position="261"/>
    </location>
</feature>
<feature type="strand" evidence="3">
    <location>
        <begin position="270"/>
        <end position="278"/>
    </location>
</feature>
<feature type="strand" evidence="10">
    <location>
        <begin position="283"/>
        <end position="285"/>
    </location>
</feature>
<feature type="strand" evidence="3">
    <location>
        <begin position="287"/>
        <end position="299"/>
    </location>
</feature>
<feature type="helix" evidence="3">
    <location>
        <begin position="304"/>
        <end position="312"/>
    </location>
</feature>
<feature type="helix" evidence="3">
    <location>
        <begin position="318"/>
        <end position="323"/>
    </location>
</feature>
<feature type="strand" evidence="3">
    <location>
        <begin position="326"/>
        <end position="328"/>
    </location>
</feature>
<feature type="strand" evidence="3">
    <location>
        <begin position="336"/>
        <end position="338"/>
    </location>
</feature>
<feature type="helix" evidence="3">
    <location>
        <begin position="340"/>
        <end position="342"/>
    </location>
</feature>
<feature type="strand" evidence="5">
    <location>
        <begin position="343"/>
        <end position="345"/>
    </location>
</feature>
<feature type="helix" evidence="3">
    <location>
        <begin position="350"/>
        <end position="355"/>
    </location>
</feature>
<feature type="turn" evidence="3">
    <location>
        <begin position="356"/>
        <end position="359"/>
    </location>
</feature>
<feature type="helix" evidence="3">
    <location>
        <begin position="361"/>
        <end position="364"/>
    </location>
</feature>
<feature type="strand" evidence="3">
    <location>
        <begin position="367"/>
        <end position="382"/>
    </location>
</feature>
<feature type="helix" evidence="3">
    <location>
        <begin position="383"/>
        <end position="386"/>
    </location>
</feature>
<feature type="strand" evidence="3">
    <location>
        <begin position="387"/>
        <end position="391"/>
    </location>
</feature>
<feature type="turn" evidence="3">
    <location>
        <begin position="392"/>
        <end position="395"/>
    </location>
</feature>
<feature type="strand" evidence="3">
    <location>
        <begin position="396"/>
        <end position="398"/>
    </location>
</feature>
<feature type="helix" evidence="7">
    <location>
        <begin position="400"/>
        <end position="402"/>
    </location>
</feature>
<feature type="helix" evidence="3">
    <location>
        <begin position="404"/>
        <end position="406"/>
    </location>
</feature>
<feature type="strand" evidence="3">
    <location>
        <begin position="408"/>
        <end position="418"/>
    </location>
</feature>
<feature type="helix" evidence="3">
    <location>
        <begin position="420"/>
        <end position="422"/>
    </location>
</feature>
<feature type="strand" evidence="3">
    <location>
        <begin position="425"/>
        <end position="434"/>
    </location>
</feature>
<feature type="helix" evidence="6">
    <location>
        <begin position="435"/>
        <end position="437"/>
    </location>
</feature>
<feature type="turn" evidence="3">
    <location>
        <begin position="439"/>
        <end position="444"/>
    </location>
</feature>
<feature type="turn" evidence="3">
    <location>
        <begin position="451"/>
        <end position="453"/>
    </location>
</feature>
<feature type="helix" evidence="3">
    <location>
        <begin position="455"/>
        <end position="469"/>
    </location>
</feature>
<feature type="strand" evidence="4">
    <location>
        <begin position="470"/>
        <end position="472"/>
    </location>
</feature>
<feature type="strand" evidence="3">
    <location>
        <begin position="473"/>
        <end position="482"/>
    </location>
</feature>
<feature type="strand" evidence="3">
    <location>
        <begin position="485"/>
        <end position="493"/>
    </location>
</feature>
<proteinExistence type="evidence at protein level"/>